<feature type="chain" id="PRO_0000307430" description="Triosephosphate isomerase">
    <location>
        <begin position="1"/>
        <end position="251"/>
    </location>
</feature>
<feature type="active site" description="Electrophile" evidence="1">
    <location>
        <position position="96"/>
    </location>
</feature>
<feature type="active site" description="Proton acceptor" evidence="1">
    <location>
        <position position="167"/>
    </location>
</feature>
<feature type="binding site" evidence="1">
    <location>
        <begin position="9"/>
        <end position="11"/>
    </location>
    <ligand>
        <name>substrate</name>
    </ligand>
</feature>
<feature type="binding site" evidence="1">
    <location>
        <position position="173"/>
    </location>
    <ligand>
        <name>substrate</name>
    </ligand>
</feature>
<feature type="binding site" evidence="1">
    <location>
        <position position="213"/>
    </location>
    <ligand>
        <name>substrate</name>
    </ligand>
</feature>
<feature type="binding site" evidence="1">
    <location>
        <begin position="234"/>
        <end position="235"/>
    </location>
    <ligand>
        <name>substrate</name>
    </ligand>
</feature>
<accession>Q64P83</accession>
<reference key="1">
    <citation type="journal article" date="2004" name="Proc. Natl. Acad. Sci. U.S.A.">
        <title>Genomic analysis of Bacteroides fragilis reveals extensive DNA inversions regulating cell surface adaptation.</title>
        <authorList>
            <person name="Kuwahara T."/>
            <person name="Yamashita A."/>
            <person name="Hirakawa H."/>
            <person name="Nakayama H."/>
            <person name="Toh H."/>
            <person name="Okada N."/>
            <person name="Kuhara S."/>
            <person name="Hattori M."/>
            <person name="Hayashi T."/>
            <person name="Ohnishi Y."/>
        </authorList>
    </citation>
    <scope>NUCLEOTIDE SEQUENCE [LARGE SCALE GENOMIC DNA]</scope>
    <source>
        <strain>YCH46</strain>
    </source>
</reference>
<evidence type="ECO:0000255" key="1">
    <source>
        <dbReference type="HAMAP-Rule" id="MF_00147"/>
    </source>
</evidence>
<protein>
    <recommendedName>
        <fullName evidence="1">Triosephosphate isomerase</fullName>
        <shortName evidence="1">TIM</shortName>
        <shortName evidence="1">TPI</shortName>
        <ecNumber evidence="1">5.3.1.1</ecNumber>
    </recommendedName>
    <alternativeName>
        <fullName evidence="1">Triose-phosphate isomerase</fullName>
    </alternativeName>
</protein>
<keyword id="KW-0963">Cytoplasm</keyword>
<keyword id="KW-0312">Gluconeogenesis</keyword>
<keyword id="KW-0324">Glycolysis</keyword>
<keyword id="KW-0413">Isomerase</keyword>
<name>TPIS_BACFR</name>
<organism>
    <name type="scientific">Bacteroides fragilis (strain YCH46)</name>
    <dbReference type="NCBI Taxonomy" id="295405"/>
    <lineage>
        <taxon>Bacteria</taxon>
        <taxon>Pseudomonadati</taxon>
        <taxon>Bacteroidota</taxon>
        <taxon>Bacteroidia</taxon>
        <taxon>Bacteroidales</taxon>
        <taxon>Bacteroidaceae</taxon>
        <taxon>Bacteroides</taxon>
    </lineage>
</organism>
<dbReference type="EC" id="5.3.1.1" evidence="1"/>
<dbReference type="EMBL" id="AP006841">
    <property type="protein sequence ID" value="BAD50698.1"/>
    <property type="molecule type" value="Genomic_DNA"/>
</dbReference>
<dbReference type="RefSeq" id="WP_005791115.1">
    <property type="nucleotide sequence ID" value="NZ_UYXF01000028.1"/>
</dbReference>
<dbReference type="RefSeq" id="YP_101232.1">
    <property type="nucleotide sequence ID" value="NC_006347.1"/>
</dbReference>
<dbReference type="SMR" id="Q64P83"/>
<dbReference type="STRING" id="295405.BF3956"/>
<dbReference type="GeneID" id="92940720"/>
<dbReference type="KEGG" id="bfr:BF3956"/>
<dbReference type="PATRIC" id="fig|295405.11.peg.3802"/>
<dbReference type="HOGENOM" id="CLU_024251_2_1_10"/>
<dbReference type="OrthoDB" id="9809429at2"/>
<dbReference type="UniPathway" id="UPA00109">
    <property type="reaction ID" value="UER00189"/>
</dbReference>
<dbReference type="UniPathway" id="UPA00138"/>
<dbReference type="Proteomes" id="UP000002197">
    <property type="component" value="Chromosome"/>
</dbReference>
<dbReference type="GO" id="GO:0005829">
    <property type="term" value="C:cytosol"/>
    <property type="evidence" value="ECO:0007669"/>
    <property type="project" value="TreeGrafter"/>
</dbReference>
<dbReference type="GO" id="GO:0004807">
    <property type="term" value="F:triose-phosphate isomerase activity"/>
    <property type="evidence" value="ECO:0007669"/>
    <property type="project" value="UniProtKB-UniRule"/>
</dbReference>
<dbReference type="GO" id="GO:0006094">
    <property type="term" value="P:gluconeogenesis"/>
    <property type="evidence" value="ECO:0007669"/>
    <property type="project" value="UniProtKB-UniRule"/>
</dbReference>
<dbReference type="GO" id="GO:0046166">
    <property type="term" value="P:glyceraldehyde-3-phosphate biosynthetic process"/>
    <property type="evidence" value="ECO:0007669"/>
    <property type="project" value="TreeGrafter"/>
</dbReference>
<dbReference type="GO" id="GO:0019563">
    <property type="term" value="P:glycerol catabolic process"/>
    <property type="evidence" value="ECO:0007669"/>
    <property type="project" value="TreeGrafter"/>
</dbReference>
<dbReference type="GO" id="GO:0006096">
    <property type="term" value="P:glycolytic process"/>
    <property type="evidence" value="ECO:0007669"/>
    <property type="project" value="UniProtKB-UniRule"/>
</dbReference>
<dbReference type="CDD" id="cd00311">
    <property type="entry name" value="TIM"/>
    <property type="match status" value="1"/>
</dbReference>
<dbReference type="FunFam" id="3.20.20.70:FF:000016">
    <property type="entry name" value="Triosephosphate isomerase"/>
    <property type="match status" value="1"/>
</dbReference>
<dbReference type="Gene3D" id="3.20.20.70">
    <property type="entry name" value="Aldolase class I"/>
    <property type="match status" value="1"/>
</dbReference>
<dbReference type="HAMAP" id="MF_00147_B">
    <property type="entry name" value="TIM_B"/>
    <property type="match status" value="1"/>
</dbReference>
<dbReference type="InterPro" id="IPR013785">
    <property type="entry name" value="Aldolase_TIM"/>
</dbReference>
<dbReference type="InterPro" id="IPR035990">
    <property type="entry name" value="TIM_sf"/>
</dbReference>
<dbReference type="InterPro" id="IPR022896">
    <property type="entry name" value="TrioseP_Isoase_bac/euk"/>
</dbReference>
<dbReference type="InterPro" id="IPR000652">
    <property type="entry name" value="Triosephosphate_isomerase"/>
</dbReference>
<dbReference type="InterPro" id="IPR020861">
    <property type="entry name" value="Triosephosphate_isomerase_AS"/>
</dbReference>
<dbReference type="NCBIfam" id="TIGR00419">
    <property type="entry name" value="tim"/>
    <property type="match status" value="1"/>
</dbReference>
<dbReference type="PANTHER" id="PTHR21139">
    <property type="entry name" value="TRIOSEPHOSPHATE ISOMERASE"/>
    <property type="match status" value="1"/>
</dbReference>
<dbReference type="PANTHER" id="PTHR21139:SF42">
    <property type="entry name" value="TRIOSEPHOSPHATE ISOMERASE"/>
    <property type="match status" value="1"/>
</dbReference>
<dbReference type="Pfam" id="PF00121">
    <property type="entry name" value="TIM"/>
    <property type="match status" value="1"/>
</dbReference>
<dbReference type="SUPFAM" id="SSF51351">
    <property type="entry name" value="Triosephosphate isomerase (TIM)"/>
    <property type="match status" value="1"/>
</dbReference>
<dbReference type="PROSITE" id="PS00171">
    <property type="entry name" value="TIM_1"/>
    <property type="match status" value="1"/>
</dbReference>
<dbReference type="PROSITE" id="PS51440">
    <property type="entry name" value="TIM_2"/>
    <property type="match status" value="1"/>
</dbReference>
<comment type="function">
    <text evidence="1">Involved in the gluconeogenesis. Catalyzes stereospecifically the conversion of dihydroxyacetone phosphate (DHAP) to D-glyceraldehyde-3-phosphate (G3P).</text>
</comment>
<comment type="catalytic activity">
    <reaction evidence="1">
        <text>D-glyceraldehyde 3-phosphate = dihydroxyacetone phosphate</text>
        <dbReference type="Rhea" id="RHEA:18585"/>
        <dbReference type="ChEBI" id="CHEBI:57642"/>
        <dbReference type="ChEBI" id="CHEBI:59776"/>
        <dbReference type="EC" id="5.3.1.1"/>
    </reaction>
</comment>
<comment type="pathway">
    <text evidence="1">Carbohydrate biosynthesis; gluconeogenesis.</text>
</comment>
<comment type="pathway">
    <text evidence="1">Carbohydrate degradation; glycolysis; D-glyceraldehyde 3-phosphate from glycerone phosphate: step 1/1.</text>
</comment>
<comment type="subunit">
    <text evidence="1">Homodimer.</text>
</comment>
<comment type="subcellular location">
    <subcellularLocation>
        <location evidence="1">Cytoplasm</location>
    </subcellularLocation>
</comment>
<comment type="similarity">
    <text evidence="1">Belongs to the triosephosphate isomerase family.</text>
</comment>
<sequence length="251" mass="26593">MRKNIVAGNWKMNKTLQEGIALAKELNEALANEKPNCDVIICTPFIHLASVTPLVDAAKIGVGAENCADKESGAYTGEVSAAMVASTGAKYVILGHSERRAYYGETVEILKDKVKLALANGLTPIFCIGEVLEEREANKQNEVVAAQLASVFDLSAEDFSKIVLAYEPVWAIGTGKTASPAQAQEIHAFIRSAVAEKYGKEIADNTSILYGGSCKPSNAKELFANPDVDGGLIGGAALKVADFKGIIDAFN</sequence>
<gene>
    <name evidence="1" type="primary">tpiA</name>
    <name type="ordered locus">BF3956</name>
</gene>
<proteinExistence type="inferred from homology"/>